<sequence>MRTATLYRYSVPMEAGVILRHQRLKSRDGLLVKLQQGELSGWGEIAPLPEFSQETLDQAQVAAECWLQHWVSGVESDDSVLPSVAFGLSCAQAELKQTLPLSADYRKAPLCTGDPDELFAVLQALPGEKVAKVKVGLYEAVRDGMIVNVLLEALPDLTLRLDANRSWSRAKADGFAKYVNPALRSRIAFLEEPCKTRAESREFAQDTGIAIAWDESVREADFQVEAEPGVAAIVIKPTLVGSLARCQQLVQQAHQAGLVAVISSSIESSLGLTQLARLAAWLTPVTVPGLDTLDLMQAQVVRPWPDSPLPLITTEQLGVVWHR</sequence>
<comment type="function">
    <text evidence="1">Converts 2-succinyl-6-hydroxy-2,4-cyclohexadiene-1-carboxylate (SHCHC) to 2-succinylbenzoate (OSB).</text>
</comment>
<comment type="catalytic activity">
    <reaction evidence="1">
        <text>(1R,6R)-6-hydroxy-2-succinyl-cyclohexa-2,4-diene-1-carboxylate = 2-succinylbenzoate + H2O</text>
        <dbReference type="Rhea" id="RHEA:10196"/>
        <dbReference type="ChEBI" id="CHEBI:15377"/>
        <dbReference type="ChEBI" id="CHEBI:18325"/>
        <dbReference type="ChEBI" id="CHEBI:58689"/>
        <dbReference type="EC" id="4.2.1.113"/>
    </reaction>
</comment>
<comment type="cofactor">
    <cofactor evidence="1">
        <name>a divalent metal cation</name>
        <dbReference type="ChEBI" id="CHEBI:60240"/>
    </cofactor>
</comment>
<comment type="pathway">
    <text evidence="1">Quinol/quinone metabolism; 1,4-dihydroxy-2-naphthoate biosynthesis; 1,4-dihydroxy-2-naphthoate from chorismate: step 4/7.</text>
</comment>
<comment type="pathway">
    <text evidence="1">Quinol/quinone metabolism; menaquinone biosynthesis.</text>
</comment>
<comment type="similarity">
    <text evidence="1">Belongs to the mandelate racemase/muconate lactonizing enzyme family. MenC type 1 subfamily.</text>
</comment>
<keyword id="KW-0456">Lyase</keyword>
<keyword id="KW-0460">Magnesium</keyword>
<keyword id="KW-0474">Menaquinone biosynthesis</keyword>
<keyword id="KW-0479">Metal-binding</keyword>
<gene>
    <name evidence="1" type="primary">menC</name>
    <name type="ordered locus">YPN_2119</name>
    <name type="ORF">YP516_2362</name>
</gene>
<feature type="chain" id="PRO_1000013818" description="o-succinylbenzoate synthase">
    <location>
        <begin position="1"/>
        <end position="323"/>
    </location>
</feature>
<feature type="active site" description="Proton donor" evidence="1">
    <location>
        <position position="134"/>
    </location>
</feature>
<feature type="active site" description="Proton acceptor" evidence="1">
    <location>
        <position position="236"/>
    </location>
</feature>
<feature type="binding site" evidence="1">
    <location>
        <position position="162"/>
    </location>
    <ligand>
        <name>Mg(2+)</name>
        <dbReference type="ChEBI" id="CHEBI:18420"/>
    </ligand>
</feature>
<feature type="binding site" evidence="1">
    <location>
        <position position="191"/>
    </location>
    <ligand>
        <name>Mg(2+)</name>
        <dbReference type="ChEBI" id="CHEBI:18420"/>
    </ligand>
</feature>
<feature type="binding site" evidence="1">
    <location>
        <position position="214"/>
    </location>
    <ligand>
        <name>Mg(2+)</name>
        <dbReference type="ChEBI" id="CHEBI:18420"/>
    </ligand>
</feature>
<accession>Q1CHT2</accession>
<accession>C4GV37</accession>
<name>MENC_YERPN</name>
<protein>
    <recommendedName>
        <fullName evidence="1">o-succinylbenzoate synthase</fullName>
        <shortName evidence="1">OSB synthase</shortName>
        <shortName evidence="1">OSBS</shortName>
        <ecNumber evidence="1">4.2.1.113</ecNumber>
    </recommendedName>
    <alternativeName>
        <fullName evidence="1">4-(2'-carboxyphenyl)-4-oxybutyric acid synthase</fullName>
    </alternativeName>
    <alternativeName>
        <fullName evidence="1">o-succinylbenzoic acid synthase</fullName>
    </alternativeName>
</protein>
<organism>
    <name type="scientific">Yersinia pestis bv. Antiqua (strain Nepal516)</name>
    <dbReference type="NCBI Taxonomy" id="377628"/>
    <lineage>
        <taxon>Bacteria</taxon>
        <taxon>Pseudomonadati</taxon>
        <taxon>Pseudomonadota</taxon>
        <taxon>Gammaproteobacteria</taxon>
        <taxon>Enterobacterales</taxon>
        <taxon>Yersiniaceae</taxon>
        <taxon>Yersinia</taxon>
    </lineage>
</organism>
<proteinExistence type="inferred from homology"/>
<reference key="1">
    <citation type="journal article" date="2006" name="J. Bacteriol.">
        <title>Complete genome sequence of Yersinia pestis strains Antiqua and Nepal516: evidence of gene reduction in an emerging pathogen.</title>
        <authorList>
            <person name="Chain P.S.G."/>
            <person name="Hu P."/>
            <person name="Malfatti S.A."/>
            <person name="Radnedge L."/>
            <person name="Larimer F."/>
            <person name="Vergez L.M."/>
            <person name="Worsham P."/>
            <person name="Chu M.C."/>
            <person name="Andersen G.L."/>
        </authorList>
    </citation>
    <scope>NUCLEOTIDE SEQUENCE [LARGE SCALE GENOMIC DNA]</scope>
    <source>
        <strain>Nepal516</strain>
    </source>
</reference>
<reference key="2">
    <citation type="submission" date="2009-04" db="EMBL/GenBank/DDBJ databases">
        <title>Yersinia pestis Nepal516A whole genome shotgun sequencing project.</title>
        <authorList>
            <person name="Plunkett G. III"/>
            <person name="Anderson B.D."/>
            <person name="Baumler D.J."/>
            <person name="Burland V."/>
            <person name="Cabot E.L."/>
            <person name="Glasner J.D."/>
            <person name="Mau B."/>
            <person name="Neeno-Eckwall E."/>
            <person name="Perna N.T."/>
            <person name="Munk A.C."/>
            <person name="Tapia R."/>
            <person name="Green L.D."/>
            <person name="Rogers Y.C."/>
            <person name="Detter J.C."/>
            <person name="Bruce D.C."/>
            <person name="Brettin T.S."/>
        </authorList>
    </citation>
    <scope>NUCLEOTIDE SEQUENCE [LARGE SCALE GENOMIC DNA]</scope>
    <source>
        <strain>Nepal516</strain>
    </source>
</reference>
<dbReference type="EC" id="4.2.1.113" evidence="1"/>
<dbReference type="EMBL" id="CP000305">
    <property type="protein sequence ID" value="ABG18448.1"/>
    <property type="molecule type" value="Genomic_DNA"/>
</dbReference>
<dbReference type="EMBL" id="ACNQ01000013">
    <property type="protein sequence ID" value="EEO76165.1"/>
    <property type="molecule type" value="Genomic_DNA"/>
</dbReference>
<dbReference type="RefSeq" id="WP_002210244.1">
    <property type="nucleotide sequence ID" value="NZ_ACNQ01000013.1"/>
</dbReference>
<dbReference type="SMR" id="Q1CHT2"/>
<dbReference type="GeneID" id="57976163"/>
<dbReference type="KEGG" id="ypn:YPN_2119"/>
<dbReference type="HOGENOM" id="CLU_030273_0_1_6"/>
<dbReference type="UniPathway" id="UPA00079"/>
<dbReference type="UniPathway" id="UPA01057">
    <property type="reaction ID" value="UER00165"/>
</dbReference>
<dbReference type="Proteomes" id="UP000008936">
    <property type="component" value="Chromosome"/>
</dbReference>
<dbReference type="GO" id="GO:0000287">
    <property type="term" value="F:magnesium ion binding"/>
    <property type="evidence" value="ECO:0007669"/>
    <property type="project" value="UniProtKB-UniRule"/>
</dbReference>
<dbReference type="GO" id="GO:0043748">
    <property type="term" value="F:O-succinylbenzoate synthase activity"/>
    <property type="evidence" value="ECO:0007669"/>
    <property type="project" value="UniProtKB-EC"/>
</dbReference>
<dbReference type="GO" id="GO:0009234">
    <property type="term" value="P:menaquinone biosynthetic process"/>
    <property type="evidence" value="ECO:0007669"/>
    <property type="project" value="UniProtKB-UniRule"/>
</dbReference>
<dbReference type="CDD" id="cd03320">
    <property type="entry name" value="OSBS"/>
    <property type="match status" value="1"/>
</dbReference>
<dbReference type="Gene3D" id="3.20.20.120">
    <property type="entry name" value="Enolase-like C-terminal domain"/>
    <property type="match status" value="1"/>
</dbReference>
<dbReference type="Gene3D" id="3.30.390.10">
    <property type="entry name" value="Enolase-like, N-terminal domain"/>
    <property type="match status" value="1"/>
</dbReference>
<dbReference type="HAMAP" id="MF_00470">
    <property type="entry name" value="MenC_1"/>
    <property type="match status" value="1"/>
</dbReference>
<dbReference type="InterPro" id="IPR036849">
    <property type="entry name" value="Enolase-like_C_sf"/>
</dbReference>
<dbReference type="InterPro" id="IPR029017">
    <property type="entry name" value="Enolase-like_N"/>
</dbReference>
<dbReference type="InterPro" id="IPR029065">
    <property type="entry name" value="Enolase_C-like"/>
</dbReference>
<dbReference type="InterPro" id="IPR013342">
    <property type="entry name" value="Mandelate_racemase_C"/>
</dbReference>
<dbReference type="InterPro" id="IPR010196">
    <property type="entry name" value="OSB_synthase_MenC1"/>
</dbReference>
<dbReference type="InterPro" id="IPR041338">
    <property type="entry name" value="OSBS_N"/>
</dbReference>
<dbReference type="NCBIfam" id="TIGR01927">
    <property type="entry name" value="menC_gam_Gplu"/>
    <property type="match status" value="1"/>
</dbReference>
<dbReference type="NCBIfam" id="NF003473">
    <property type="entry name" value="PRK05105.1"/>
    <property type="match status" value="1"/>
</dbReference>
<dbReference type="PANTHER" id="PTHR48073:SF2">
    <property type="entry name" value="O-SUCCINYLBENZOATE SYNTHASE"/>
    <property type="match status" value="1"/>
</dbReference>
<dbReference type="PANTHER" id="PTHR48073">
    <property type="entry name" value="O-SUCCINYLBENZOATE SYNTHASE-RELATED"/>
    <property type="match status" value="1"/>
</dbReference>
<dbReference type="Pfam" id="PF21508">
    <property type="entry name" value="MenC_N"/>
    <property type="match status" value="1"/>
</dbReference>
<dbReference type="Pfam" id="PF13378">
    <property type="entry name" value="MR_MLE_C"/>
    <property type="match status" value="1"/>
</dbReference>
<dbReference type="SFLD" id="SFLDS00001">
    <property type="entry name" value="Enolase"/>
    <property type="match status" value="1"/>
</dbReference>
<dbReference type="SFLD" id="SFLDF00009">
    <property type="entry name" value="o-succinylbenzoate_synthase"/>
    <property type="match status" value="1"/>
</dbReference>
<dbReference type="SMART" id="SM00922">
    <property type="entry name" value="MR_MLE"/>
    <property type="match status" value="1"/>
</dbReference>
<dbReference type="SUPFAM" id="SSF51604">
    <property type="entry name" value="Enolase C-terminal domain-like"/>
    <property type="match status" value="1"/>
</dbReference>
<dbReference type="SUPFAM" id="SSF54826">
    <property type="entry name" value="Enolase N-terminal domain-like"/>
    <property type="match status" value="1"/>
</dbReference>
<evidence type="ECO:0000255" key="1">
    <source>
        <dbReference type="HAMAP-Rule" id="MF_00470"/>
    </source>
</evidence>